<dbReference type="EC" id="3.2.1.28" evidence="2"/>
<dbReference type="EMBL" id="ABSU01000041">
    <property type="protein sequence ID" value="EFE29423.1"/>
    <property type="molecule type" value="Genomic_DNA"/>
</dbReference>
<dbReference type="RefSeq" id="XP_003010063.1">
    <property type="nucleotide sequence ID" value="XM_003010017.1"/>
</dbReference>
<dbReference type="SMR" id="D4B5H9"/>
<dbReference type="STRING" id="663331.D4B5H9"/>
<dbReference type="GeneID" id="9525659"/>
<dbReference type="KEGG" id="abe:ARB_03719"/>
<dbReference type="eggNOG" id="KOG4125">
    <property type="taxonomic scope" value="Eukaryota"/>
</dbReference>
<dbReference type="HOGENOM" id="CLU_006285_4_0_1"/>
<dbReference type="OMA" id="NHVDAGG"/>
<dbReference type="OrthoDB" id="200349at2759"/>
<dbReference type="Proteomes" id="UP000008866">
    <property type="component" value="Unassembled WGS sequence"/>
</dbReference>
<dbReference type="GO" id="GO:0005576">
    <property type="term" value="C:extracellular region"/>
    <property type="evidence" value="ECO:0007669"/>
    <property type="project" value="UniProtKB-SubCell"/>
</dbReference>
<dbReference type="GO" id="GO:0009277">
    <property type="term" value="C:fungal-type cell wall"/>
    <property type="evidence" value="ECO:0007669"/>
    <property type="project" value="TreeGrafter"/>
</dbReference>
<dbReference type="GO" id="GO:0004555">
    <property type="term" value="F:alpha,alpha-trehalase activity"/>
    <property type="evidence" value="ECO:0007669"/>
    <property type="project" value="UniProtKB-EC"/>
</dbReference>
<dbReference type="GO" id="GO:0030246">
    <property type="term" value="F:carbohydrate binding"/>
    <property type="evidence" value="ECO:0007669"/>
    <property type="project" value="InterPro"/>
</dbReference>
<dbReference type="GO" id="GO:0005993">
    <property type="term" value="P:trehalose catabolic process"/>
    <property type="evidence" value="ECO:0007669"/>
    <property type="project" value="TreeGrafter"/>
</dbReference>
<dbReference type="FunFam" id="2.70.98.40:FF:000004">
    <property type="entry name" value="Alpha,alpha-trehalose glucohydrolase TreA/Ath1"/>
    <property type="match status" value="1"/>
</dbReference>
<dbReference type="FunFam" id="1.50.10.10:FF:000032">
    <property type="entry name" value="Vacuolar acid trehalase"/>
    <property type="match status" value="1"/>
</dbReference>
<dbReference type="Gene3D" id="1.50.10.10">
    <property type="match status" value="1"/>
</dbReference>
<dbReference type="Gene3D" id="2.70.98.40">
    <property type="entry name" value="Glycoside hydrolase, family 65, N-terminal domain"/>
    <property type="match status" value="1"/>
</dbReference>
<dbReference type="Gene3D" id="2.60.420.10">
    <property type="entry name" value="Maltose phosphorylase, domain 3"/>
    <property type="match status" value="1"/>
</dbReference>
<dbReference type="InterPro" id="IPR008928">
    <property type="entry name" value="6-hairpin_glycosidase_sf"/>
</dbReference>
<dbReference type="InterPro" id="IPR012341">
    <property type="entry name" value="6hp_glycosidase-like_sf"/>
</dbReference>
<dbReference type="InterPro" id="IPR011013">
    <property type="entry name" value="Gal_mutarotase_sf_dom"/>
</dbReference>
<dbReference type="InterPro" id="IPR005194">
    <property type="entry name" value="Glyco_hydro_65_C"/>
</dbReference>
<dbReference type="InterPro" id="IPR005195">
    <property type="entry name" value="Glyco_hydro_65_M"/>
</dbReference>
<dbReference type="InterPro" id="IPR005196">
    <property type="entry name" value="Glyco_hydro_65_N"/>
</dbReference>
<dbReference type="InterPro" id="IPR037018">
    <property type="entry name" value="Glyco_hydro_65_N_sf"/>
</dbReference>
<dbReference type="PANTHER" id="PTHR11051">
    <property type="entry name" value="GLYCOSYL HYDROLASE-RELATED"/>
    <property type="match status" value="1"/>
</dbReference>
<dbReference type="PANTHER" id="PTHR11051:SF8">
    <property type="entry name" value="PROTEIN-GLUCOSYLGALACTOSYLHYDROXYLYSINE GLUCOSIDASE"/>
    <property type="match status" value="1"/>
</dbReference>
<dbReference type="Pfam" id="PF03633">
    <property type="entry name" value="Glyco_hydro_65C"/>
    <property type="match status" value="1"/>
</dbReference>
<dbReference type="Pfam" id="PF03632">
    <property type="entry name" value="Glyco_hydro_65m"/>
    <property type="match status" value="1"/>
</dbReference>
<dbReference type="Pfam" id="PF03636">
    <property type="entry name" value="Glyco_hydro_65N"/>
    <property type="match status" value="1"/>
</dbReference>
<dbReference type="SUPFAM" id="SSF74650">
    <property type="entry name" value="Galactose mutarotase-like"/>
    <property type="match status" value="1"/>
</dbReference>
<dbReference type="SUPFAM" id="SSF48208">
    <property type="entry name" value="Six-hairpin glycosidases"/>
    <property type="match status" value="1"/>
</dbReference>
<keyword id="KW-0134">Cell wall</keyword>
<keyword id="KW-0325">Glycoprotein</keyword>
<keyword id="KW-0326">Glycosidase</keyword>
<keyword id="KW-0378">Hydrolase</keyword>
<keyword id="KW-1185">Reference proteome</keyword>
<keyword id="KW-0964">Secreted</keyword>
<keyword id="KW-0732">Signal</keyword>
<keyword id="KW-0843">Virulence</keyword>
<reference key="1">
    <citation type="journal article" date="2011" name="Genome Biol.">
        <title>Comparative and functional genomics provide insights into the pathogenicity of dermatophytic fungi.</title>
        <authorList>
            <person name="Burmester A."/>
            <person name="Shelest E."/>
            <person name="Gloeckner G."/>
            <person name="Heddergott C."/>
            <person name="Schindler S."/>
            <person name="Staib P."/>
            <person name="Heidel A."/>
            <person name="Felder M."/>
            <person name="Petzold A."/>
            <person name="Szafranski K."/>
            <person name="Feuermann M."/>
            <person name="Pedruzzi I."/>
            <person name="Priebe S."/>
            <person name="Groth M."/>
            <person name="Winkler R."/>
            <person name="Li W."/>
            <person name="Kniemeyer O."/>
            <person name="Schroeckh V."/>
            <person name="Hertweck C."/>
            <person name="Hube B."/>
            <person name="White T.C."/>
            <person name="Platzer M."/>
            <person name="Guthke R."/>
            <person name="Heitman J."/>
            <person name="Woestemeyer J."/>
            <person name="Zipfel P.F."/>
            <person name="Monod M."/>
            <person name="Brakhage A.A."/>
        </authorList>
    </citation>
    <scope>NUCLEOTIDE SEQUENCE [LARGE SCALE GENOMIC DNA]</scope>
    <source>
        <strain>ATCC MYA-4681 / CBS 112371</strain>
    </source>
</reference>
<reference key="2">
    <citation type="journal article" date="2011" name="Proteomics">
        <title>Identification of novel secreted proteases during extracellular proteolysis by dermatophytes at acidic pH.</title>
        <authorList>
            <person name="Sriranganadane D."/>
            <person name="Waridel P."/>
            <person name="Salamin K."/>
            <person name="Feuermann M."/>
            <person name="Mignon B."/>
            <person name="Staib P."/>
            <person name="Neuhaus J.M."/>
            <person name="Quadroni M."/>
            <person name="Monod M."/>
        </authorList>
    </citation>
    <scope>IDENTIFICATION BY MASS SPECTROMETRY</scope>
    <scope>SUBCELLULAR LOCATION</scope>
</reference>
<proteinExistence type="evidence at protein level"/>
<comment type="function">
    <text evidence="2">Cell wall acid trehalase that catalyzes hydrolysis of the disaccharide trehalose and required for growth on trehalose as carbon source (By similarity). Plays a role in virulence (By similarity).</text>
</comment>
<comment type="catalytic activity">
    <reaction evidence="2">
        <text>alpha,alpha-trehalose + H2O = alpha-D-glucose + beta-D-glucose</text>
        <dbReference type="Rhea" id="RHEA:32675"/>
        <dbReference type="ChEBI" id="CHEBI:15377"/>
        <dbReference type="ChEBI" id="CHEBI:15903"/>
        <dbReference type="ChEBI" id="CHEBI:16551"/>
        <dbReference type="ChEBI" id="CHEBI:17925"/>
        <dbReference type="EC" id="3.2.1.28"/>
    </reaction>
</comment>
<comment type="subcellular location">
    <subcellularLocation>
        <location evidence="6">Secreted</location>
    </subcellularLocation>
    <subcellularLocation>
        <location evidence="2">Secreted</location>
        <location evidence="2">Cell wall</location>
    </subcellularLocation>
</comment>
<comment type="similarity">
    <text evidence="7">Belongs to the glycosyl hydrolase 65 family.</text>
</comment>
<sequence length="1054" mass="114794">MKQPNINLAACILWLLSIITAVAAETDAERNTGVFARNSAARNRSPGNEPPGYATRFKGVTWDVANWRLTTTELDQGHYQSRGSVANGYLGINVAAVGPFFELDIPVSGDVINGWPVFSRRQTFATISDFYSFQRSINATNFPWLDKYGGDLISGVPHWSGLILDLGDGNFLDATVKNSTISNFSSTLDMKGGILTWQYTWSPEKHNGTYDIFYQLVAHKLHVNQALVRLEITPSRDGNVSVVNVIDGYSAVRTDFKGSGQDGSAIYTSVNPEGISNVTAFIYAELSGTEGVDLSSSSLVDDKPYIHMNGSTIAQSVNVKLRAGQTTKIDKFVGAASTDGFKNPRQAAKEASARALRTGYEESLKSHIAEWATVFPSDSTEDYTIPGKKWLPLDHHIIEASIVSVVNPYYLLQSTVSNNALAAVKNAPLNRGSIAVGGLTSDSYGGLVFWDADIWMQPGLVVAFPEASQIFSNYRVDKYGQALRNAQTQHLSSKNDTYFSPDAAVYPWTSGRFANCTATGPCFDYQYHLNGDIGMQIVNNWVTTGDTEHFKSKLFPVYNSIATFFSQLVEKNGTKWTVTNMTDPDEYANLVDGGGYTMPLIATTLKYANQFREMFGIGANQTWNEIAQNVQVSRDQASQITLEYTTMNGSTQVKQADIVLNTFPLHYTEDYTHDNALRDLDYYAAKQSPNGPAMTYAIFSIVANEVSPSGCSAYTYGQYSFSPYVRAPFFQFSEQLMDDWSINGGTHPAYPFLTGNGGANQVAVFGYLGLRLIPDGILHLNPNLPPQIPHLRYRTFYWHGWPLEASANYTQTTIQRATNRRPLTSADPKYASAPITVHVGPANNITVYSLPPSGQLVIPNRQIGSISTVPGNLVQCQPVFSPNEFAPGQFPISAVDGAASTKWQPRRASSTSSLTVTLPDHASSATISGFAFDWAQAPPVSAKVVLHDEPLHPVTDPENGDASGSSPTTPASSVTVWESAKVPLSDPYDPIKIDLNMIMSYKGNTTNVTLPSTVPATKFATLLIRGNQALGPVEVRAGNGTGATVAEWSIVRSS</sequence>
<evidence type="ECO:0000250" key="1">
    <source>
        <dbReference type="UniProtKB" id="D6XZ22"/>
    </source>
</evidence>
<evidence type="ECO:0000250" key="2">
    <source>
        <dbReference type="UniProtKB" id="Q5AAU5"/>
    </source>
</evidence>
<evidence type="ECO:0000255" key="3"/>
<evidence type="ECO:0000255" key="4">
    <source>
        <dbReference type="PROSITE-ProRule" id="PRU00498"/>
    </source>
</evidence>
<evidence type="ECO:0000256" key="5">
    <source>
        <dbReference type="SAM" id="MobiDB-lite"/>
    </source>
</evidence>
<evidence type="ECO:0000269" key="6">
    <source>
    </source>
</evidence>
<evidence type="ECO:0000305" key="7"/>
<feature type="signal peptide" evidence="3">
    <location>
        <begin position="1"/>
        <end position="24"/>
    </location>
</feature>
<feature type="chain" id="PRO_0000434664" description="Cell wall acid trehalase ARB_03719" evidence="3">
    <location>
        <begin position="25"/>
        <end position="1054"/>
    </location>
</feature>
<feature type="region of interest" description="Disordered" evidence="5">
    <location>
        <begin position="950"/>
        <end position="974"/>
    </location>
</feature>
<feature type="compositionally biased region" description="Low complexity" evidence="5">
    <location>
        <begin position="962"/>
        <end position="974"/>
    </location>
</feature>
<feature type="active site" description="Proton donor" evidence="1">
    <location>
        <position position="586"/>
    </location>
</feature>
<feature type="binding site" evidence="1">
    <location>
        <begin position="450"/>
        <end position="451"/>
    </location>
    <ligand>
        <name>substrate</name>
    </ligand>
</feature>
<feature type="binding site" evidence="1">
    <location>
        <begin position="654"/>
        <end position="655"/>
    </location>
    <ligand>
        <name>substrate</name>
    </ligand>
</feature>
<feature type="glycosylation site" description="N-linked (GlcNAc...) asparagine" evidence="4">
    <location>
        <position position="138"/>
    </location>
</feature>
<feature type="glycosylation site" description="N-linked (GlcNAc...) asparagine" evidence="4">
    <location>
        <position position="178"/>
    </location>
</feature>
<feature type="glycosylation site" description="N-linked (GlcNAc...) asparagine" evidence="4">
    <location>
        <position position="183"/>
    </location>
</feature>
<feature type="glycosylation site" description="N-linked (GlcNAc...) asparagine" evidence="4">
    <location>
        <position position="207"/>
    </location>
</feature>
<feature type="glycosylation site" description="N-linked (GlcNAc...) asparagine" evidence="4">
    <location>
        <position position="239"/>
    </location>
</feature>
<feature type="glycosylation site" description="N-linked (GlcNAc...) asparagine" evidence="4">
    <location>
        <position position="277"/>
    </location>
</feature>
<feature type="glycosylation site" description="N-linked (GlcNAc...) asparagine" evidence="4">
    <location>
        <position position="309"/>
    </location>
</feature>
<feature type="glycosylation site" description="N-linked (GlcNAc...) asparagine" evidence="4">
    <location>
        <position position="495"/>
    </location>
</feature>
<feature type="glycosylation site" description="N-linked (GlcNAc...) asparagine" evidence="4">
    <location>
        <position position="515"/>
    </location>
</feature>
<feature type="glycosylation site" description="N-linked (GlcNAc...) asparagine" evidence="4">
    <location>
        <position position="572"/>
    </location>
</feature>
<feature type="glycosylation site" description="N-linked (GlcNAc...) asparagine" evidence="4">
    <location>
        <position position="580"/>
    </location>
</feature>
<feature type="glycosylation site" description="N-linked (GlcNAc...) asparagine" evidence="4">
    <location>
        <position position="620"/>
    </location>
</feature>
<feature type="glycosylation site" description="N-linked (GlcNAc...) asparagine" evidence="4">
    <location>
        <position position="648"/>
    </location>
</feature>
<feature type="glycosylation site" description="N-linked (GlcNAc...) asparagine" evidence="4">
    <location>
        <position position="808"/>
    </location>
</feature>
<feature type="glycosylation site" description="N-linked (GlcNAc...) asparagine" evidence="4">
    <location>
        <position position="844"/>
    </location>
</feature>
<feature type="glycosylation site" description="N-linked (GlcNAc...) asparagine" evidence="4">
    <location>
        <position position="1004"/>
    </location>
</feature>
<feature type="glycosylation site" description="N-linked (GlcNAc...) asparagine" evidence="4">
    <location>
        <position position="1007"/>
    </location>
</feature>
<feature type="glycosylation site" description="N-linked (GlcNAc...) asparagine" evidence="4">
    <location>
        <position position="1039"/>
    </location>
</feature>
<accession>D4B5H9</accession>
<name>ATC1_ARTBC</name>
<gene>
    <name type="ORF">ARB_03719</name>
</gene>
<protein>
    <recommendedName>
        <fullName evidence="7">Cell wall acid trehalase ARB_03719</fullName>
        <ecNumber evidence="2">3.2.1.28</ecNumber>
    </recommendedName>
    <alternativeName>
        <fullName evidence="2">Alpha,alpha-trehalase</fullName>
    </alternativeName>
    <alternativeName>
        <fullName evidence="2">Alpha,alpha-trehalose glucohydrolase</fullName>
    </alternativeName>
</protein>
<organism>
    <name type="scientific">Arthroderma benhamiae (strain ATCC MYA-4681 / CBS 112371)</name>
    <name type="common">Trichophyton mentagrophytes</name>
    <dbReference type="NCBI Taxonomy" id="663331"/>
    <lineage>
        <taxon>Eukaryota</taxon>
        <taxon>Fungi</taxon>
        <taxon>Dikarya</taxon>
        <taxon>Ascomycota</taxon>
        <taxon>Pezizomycotina</taxon>
        <taxon>Eurotiomycetes</taxon>
        <taxon>Eurotiomycetidae</taxon>
        <taxon>Onygenales</taxon>
        <taxon>Arthrodermataceae</taxon>
        <taxon>Trichophyton</taxon>
    </lineage>
</organism>